<dbReference type="EMBL" id="AY560892">
    <property type="protein sequence ID" value="AAT44959.1"/>
    <property type="molecule type" value="mRNA"/>
</dbReference>
<dbReference type="EMBL" id="AC025417">
    <property type="protein sequence ID" value="AAF88096.1"/>
    <property type="molecule type" value="Genomic_DNA"/>
</dbReference>
<dbReference type="EMBL" id="CP002684">
    <property type="protein sequence ID" value="AEE28901.1"/>
    <property type="molecule type" value="Genomic_DNA"/>
</dbReference>
<dbReference type="EMBL" id="AK228194">
    <property type="protein sequence ID" value="BAF00148.1"/>
    <property type="molecule type" value="mRNA"/>
</dbReference>
<dbReference type="PIR" id="H86259">
    <property type="entry name" value="H86259"/>
</dbReference>
<dbReference type="SMR" id="Q9LN86"/>
<dbReference type="FunCoup" id="Q9LN86">
    <property type="interactions" value="3"/>
</dbReference>
<dbReference type="STRING" id="3702.Q9LN86"/>
<dbReference type="iPTMnet" id="Q9LN86"/>
<dbReference type="PaxDb" id="3702-AT1G12610.1"/>
<dbReference type="EnsemblPlants" id="AT1G12610.1">
    <property type="protein sequence ID" value="AT1G12610.1"/>
    <property type="gene ID" value="AT1G12610"/>
</dbReference>
<dbReference type="GeneID" id="837817"/>
<dbReference type="Gramene" id="AT1G12610.1">
    <property type="protein sequence ID" value="AT1G12610.1"/>
    <property type="gene ID" value="AT1G12610"/>
</dbReference>
<dbReference type="KEGG" id="ath:AT1G12610"/>
<dbReference type="Araport" id="AT1G12610"/>
<dbReference type="TAIR" id="AT1G12610">
    <property type="gene designation" value="DDF1"/>
</dbReference>
<dbReference type="eggNOG" id="ENOG502RY2A">
    <property type="taxonomic scope" value="Eukaryota"/>
</dbReference>
<dbReference type="HOGENOM" id="CLU_063331_1_0_1"/>
<dbReference type="InParanoid" id="Q9LN86"/>
<dbReference type="OMA" id="YTEEEMC"/>
<dbReference type="OrthoDB" id="676764at2759"/>
<dbReference type="PhylomeDB" id="Q9LN86"/>
<dbReference type="PRO" id="PR:Q9LN86"/>
<dbReference type="Proteomes" id="UP000006548">
    <property type="component" value="Chromosome 1"/>
</dbReference>
<dbReference type="ExpressionAtlas" id="Q9LN86">
    <property type="expression patterns" value="baseline and differential"/>
</dbReference>
<dbReference type="GO" id="GO:0005634">
    <property type="term" value="C:nucleus"/>
    <property type="evidence" value="ECO:0007669"/>
    <property type="project" value="UniProtKB-SubCell"/>
</dbReference>
<dbReference type="GO" id="GO:0003700">
    <property type="term" value="F:DNA-binding transcription factor activity"/>
    <property type="evidence" value="ECO:0000250"/>
    <property type="project" value="TAIR"/>
</dbReference>
<dbReference type="GO" id="GO:0043565">
    <property type="term" value="F:sequence-specific DNA binding"/>
    <property type="evidence" value="ECO:0000353"/>
    <property type="project" value="TAIR"/>
</dbReference>
<dbReference type="GO" id="GO:0000976">
    <property type="term" value="F:transcription cis-regulatory region binding"/>
    <property type="evidence" value="ECO:0000353"/>
    <property type="project" value="TAIR"/>
</dbReference>
<dbReference type="GO" id="GO:0019760">
    <property type="term" value="P:glucosinolate metabolic process"/>
    <property type="evidence" value="ECO:0000315"/>
    <property type="project" value="TAIR"/>
</dbReference>
<dbReference type="GO" id="GO:0010371">
    <property type="term" value="P:regulation of gibberellin biosynthetic process"/>
    <property type="evidence" value="ECO:0000315"/>
    <property type="project" value="TAIR"/>
</dbReference>
<dbReference type="GO" id="GO:0048510">
    <property type="term" value="P:regulation of timing of transition from vegetative to reproductive phase"/>
    <property type="evidence" value="ECO:0000315"/>
    <property type="project" value="TAIR"/>
</dbReference>
<dbReference type="GO" id="GO:0051510">
    <property type="term" value="P:regulation of unidimensional cell growth"/>
    <property type="evidence" value="ECO:0000315"/>
    <property type="project" value="TAIR"/>
</dbReference>
<dbReference type="GO" id="GO:0050826">
    <property type="term" value="P:response to freezing"/>
    <property type="evidence" value="ECO:0000315"/>
    <property type="project" value="TAIR"/>
</dbReference>
<dbReference type="GO" id="GO:0009408">
    <property type="term" value="P:response to heat"/>
    <property type="evidence" value="ECO:0000315"/>
    <property type="project" value="TAIR"/>
</dbReference>
<dbReference type="GO" id="GO:0009414">
    <property type="term" value="P:response to water deprivation"/>
    <property type="evidence" value="ECO:0000315"/>
    <property type="project" value="TAIR"/>
</dbReference>
<dbReference type="CDD" id="cd00018">
    <property type="entry name" value="AP2"/>
    <property type="match status" value="1"/>
</dbReference>
<dbReference type="FunFam" id="3.30.730.10:FF:000001">
    <property type="entry name" value="Ethylene-responsive transcription factor 2"/>
    <property type="match status" value="1"/>
</dbReference>
<dbReference type="Gene3D" id="3.30.730.10">
    <property type="entry name" value="AP2/ERF domain"/>
    <property type="match status" value="1"/>
</dbReference>
<dbReference type="InterPro" id="IPR001471">
    <property type="entry name" value="AP2/ERF_dom"/>
</dbReference>
<dbReference type="InterPro" id="IPR036955">
    <property type="entry name" value="AP2/ERF_dom_sf"/>
</dbReference>
<dbReference type="InterPro" id="IPR016177">
    <property type="entry name" value="DNA-bd_dom_sf"/>
</dbReference>
<dbReference type="InterPro" id="IPR045277">
    <property type="entry name" value="DRE1A-I"/>
</dbReference>
<dbReference type="PANTHER" id="PTHR31839">
    <property type="entry name" value="DEHYDRATION-RESPONSIVE ELEMENT-BINDING PROTEIN 1D"/>
    <property type="match status" value="1"/>
</dbReference>
<dbReference type="PANTHER" id="PTHR31839:SF55">
    <property type="entry name" value="DEHYDRATION-RESPONSIVE ELEMENT-BINDING PROTEIN 1F"/>
    <property type="match status" value="1"/>
</dbReference>
<dbReference type="Pfam" id="PF00847">
    <property type="entry name" value="AP2"/>
    <property type="match status" value="1"/>
</dbReference>
<dbReference type="PRINTS" id="PR00367">
    <property type="entry name" value="ETHRSPELEMNT"/>
</dbReference>
<dbReference type="SMART" id="SM00380">
    <property type="entry name" value="AP2"/>
    <property type="match status" value="1"/>
</dbReference>
<dbReference type="SUPFAM" id="SSF54171">
    <property type="entry name" value="DNA-binding domain"/>
    <property type="match status" value="1"/>
</dbReference>
<dbReference type="PROSITE" id="PS51032">
    <property type="entry name" value="AP2_ERF"/>
    <property type="match status" value="1"/>
</dbReference>
<sequence length="209" mass="23616">MNNDDIILAEMRPKKRAGRRVFKETRHPVYRGIRRRNGDKWVCEVREPTHQRRIWLGTYPTADMAARAHDVAVLALRGRSACLNFADSAWRLPVPESNDPDVIRRVAAEAAEMFRPVDLESGITVLPCAGDDVDLGFGSGSGSGSGSEERNSSSYGFGDYEEVSTTMMRLAEGPLMSPPRSYMEDMTPTNVYTEEEMCYEDMSLWSYRY</sequence>
<protein>
    <recommendedName>
        <fullName>Dehydration-responsive element-binding protein 1F</fullName>
        <shortName>Protein DREB1F</shortName>
    </recommendedName>
</protein>
<gene>
    <name type="primary">DREB1F</name>
    <name type="synonym">DDF2</name>
    <name type="synonym">ERF033</name>
    <name type="ordered locus">At1g12610</name>
    <name type="ORF">T12C24.14</name>
</gene>
<proteinExistence type="evidence at transcript level"/>
<name>DRE1F_ARATH</name>
<reference key="1">
    <citation type="submission" date="2004-02" db="EMBL/GenBank/DDBJ databases">
        <title>Molecular cloning, expression, phylogenetic and functional characterization of the Arabidopsis AP2/EREBP transcription factor family.</title>
        <authorList>
            <person name="Pan Y."/>
            <person name="Gong W."/>
            <person name="Liu D."/>
            <person name="Fu Q."/>
            <person name="Mei W.-Q."/>
            <person name="Song W.-Q."/>
            <person name="Ma L.-G."/>
            <person name="Luo J.-C."/>
            <person name="Deng X.-W."/>
            <person name="Zhu Y.-X."/>
        </authorList>
    </citation>
    <scope>NUCLEOTIDE SEQUENCE [MRNA]</scope>
</reference>
<reference key="2">
    <citation type="journal article" date="2000" name="Nature">
        <title>Sequence and analysis of chromosome 1 of the plant Arabidopsis thaliana.</title>
        <authorList>
            <person name="Theologis A."/>
            <person name="Ecker J.R."/>
            <person name="Palm C.J."/>
            <person name="Federspiel N.A."/>
            <person name="Kaul S."/>
            <person name="White O."/>
            <person name="Alonso J."/>
            <person name="Altafi H."/>
            <person name="Araujo R."/>
            <person name="Bowman C.L."/>
            <person name="Brooks S.Y."/>
            <person name="Buehler E."/>
            <person name="Chan A."/>
            <person name="Chao Q."/>
            <person name="Chen H."/>
            <person name="Cheuk R.F."/>
            <person name="Chin C.W."/>
            <person name="Chung M.K."/>
            <person name="Conn L."/>
            <person name="Conway A.B."/>
            <person name="Conway A.R."/>
            <person name="Creasy T.H."/>
            <person name="Dewar K."/>
            <person name="Dunn P."/>
            <person name="Etgu P."/>
            <person name="Feldblyum T.V."/>
            <person name="Feng J.-D."/>
            <person name="Fong B."/>
            <person name="Fujii C.Y."/>
            <person name="Gill J.E."/>
            <person name="Goldsmith A.D."/>
            <person name="Haas B."/>
            <person name="Hansen N.F."/>
            <person name="Hughes B."/>
            <person name="Huizar L."/>
            <person name="Hunter J.L."/>
            <person name="Jenkins J."/>
            <person name="Johnson-Hopson C."/>
            <person name="Khan S."/>
            <person name="Khaykin E."/>
            <person name="Kim C.J."/>
            <person name="Koo H.L."/>
            <person name="Kremenetskaia I."/>
            <person name="Kurtz D.B."/>
            <person name="Kwan A."/>
            <person name="Lam B."/>
            <person name="Langin-Hooper S."/>
            <person name="Lee A."/>
            <person name="Lee J.M."/>
            <person name="Lenz C.A."/>
            <person name="Li J.H."/>
            <person name="Li Y.-P."/>
            <person name="Lin X."/>
            <person name="Liu S.X."/>
            <person name="Liu Z.A."/>
            <person name="Luros J.S."/>
            <person name="Maiti R."/>
            <person name="Marziali A."/>
            <person name="Militscher J."/>
            <person name="Miranda M."/>
            <person name="Nguyen M."/>
            <person name="Nierman W.C."/>
            <person name="Osborne B.I."/>
            <person name="Pai G."/>
            <person name="Peterson J."/>
            <person name="Pham P.K."/>
            <person name="Rizzo M."/>
            <person name="Rooney T."/>
            <person name="Rowley D."/>
            <person name="Sakano H."/>
            <person name="Salzberg S.L."/>
            <person name="Schwartz J.R."/>
            <person name="Shinn P."/>
            <person name="Southwick A.M."/>
            <person name="Sun H."/>
            <person name="Tallon L.J."/>
            <person name="Tambunga G."/>
            <person name="Toriumi M.J."/>
            <person name="Town C.D."/>
            <person name="Utterback T."/>
            <person name="Van Aken S."/>
            <person name="Vaysberg M."/>
            <person name="Vysotskaia V.S."/>
            <person name="Walker M."/>
            <person name="Wu D."/>
            <person name="Yu G."/>
            <person name="Fraser C.M."/>
            <person name="Venter J.C."/>
            <person name="Davis R.W."/>
        </authorList>
    </citation>
    <scope>NUCLEOTIDE SEQUENCE [LARGE SCALE GENOMIC DNA]</scope>
    <source>
        <strain>cv. Columbia</strain>
    </source>
</reference>
<reference key="3">
    <citation type="journal article" date="2017" name="Plant J.">
        <title>Araport11: a complete reannotation of the Arabidopsis thaliana reference genome.</title>
        <authorList>
            <person name="Cheng C.Y."/>
            <person name="Krishnakumar V."/>
            <person name="Chan A.P."/>
            <person name="Thibaud-Nissen F."/>
            <person name="Schobel S."/>
            <person name="Town C.D."/>
        </authorList>
    </citation>
    <scope>GENOME REANNOTATION</scope>
    <source>
        <strain>cv. Columbia</strain>
    </source>
</reference>
<reference key="4">
    <citation type="submission" date="2006-07" db="EMBL/GenBank/DDBJ databases">
        <title>Large-scale analysis of RIKEN Arabidopsis full-length (RAFL) cDNAs.</title>
        <authorList>
            <person name="Totoki Y."/>
            <person name="Seki M."/>
            <person name="Ishida J."/>
            <person name="Nakajima M."/>
            <person name="Enju A."/>
            <person name="Kamiya A."/>
            <person name="Narusaka M."/>
            <person name="Shin-i T."/>
            <person name="Nakagawa M."/>
            <person name="Sakamoto N."/>
            <person name="Oishi K."/>
            <person name="Kohara Y."/>
            <person name="Kobayashi M."/>
            <person name="Toyoda A."/>
            <person name="Sakaki Y."/>
            <person name="Sakurai T."/>
            <person name="Iida K."/>
            <person name="Akiyama K."/>
            <person name="Satou M."/>
            <person name="Toyoda T."/>
            <person name="Konagaya A."/>
            <person name="Carninci P."/>
            <person name="Kawai J."/>
            <person name="Hayashizaki Y."/>
            <person name="Shinozaki K."/>
        </authorList>
    </citation>
    <scope>NUCLEOTIDE SEQUENCE [LARGE SCALE MRNA]</scope>
    <source>
        <strain>cv. Columbia</strain>
    </source>
</reference>
<reference key="5">
    <citation type="journal article" date="2002" name="Biochem. Biophys. Res. Commun.">
        <title>DNA-binding specificity of the ERF/AP2 domain of Arabidopsis DREBs, transcription factors involved in dehydration- and cold-inducible gene expression.</title>
        <authorList>
            <person name="Sakuma Y."/>
            <person name="Liu Q."/>
            <person name="Dubouzet J.G."/>
            <person name="Abe H."/>
            <person name="Shinozaki K."/>
            <person name="Yamaguchi-Shinozaki K."/>
        </authorList>
    </citation>
    <scope>GENE FAMILY</scope>
    <scope>FUNCTION</scope>
    <scope>INDUCTION</scope>
</reference>
<reference key="6">
    <citation type="journal article" date="2006" name="Plant Physiol.">
        <title>Genome-wide analysis of the ERF gene family in Arabidopsis and rice.</title>
        <authorList>
            <person name="Nakano T."/>
            <person name="Suzuki K."/>
            <person name="Fujimura T."/>
            <person name="Shinshi H."/>
        </authorList>
    </citation>
    <scope>GENE FAMILY</scope>
    <scope>NOMENCLATURE</scope>
</reference>
<feature type="chain" id="PRO_0000112533" description="Dehydration-responsive element-binding protein 1F">
    <location>
        <begin position="1"/>
        <end position="209"/>
    </location>
</feature>
<feature type="DNA-binding region" description="AP2/ERF" evidence="2">
    <location>
        <begin position="29"/>
        <end position="86"/>
    </location>
</feature>
<feature type="region of interest" description="Disordered" evidence="3">
    <location>
        <begin position="137"/>
        <end position="157"/>
    </location>
</feature>
<feature type="short sequence motif" description="Nuclear localization signal" evidence="1">
    <location>
        <begin position="14"/>
        <end position="26"/>
    </location>
</feature>
<organism>
    <name type="scientific">Arabidopsis thaliana</name>
    <name type="common">Mouse-ear cress</name>
    <dbReference type="NCBI Taxonomy" id="3702"/>
    <lineage>
        <taxon>Eukaryota</taxon>
        <taxon>Viridiplantae</taxon>
        <taxon>Streptophyta</taxon>
        <taxon>Embryophyta</taxon>
        <taxon>Tracheophyta</taxon>
        <taxon>Spermatophyta</taxon>
        <taxon>Magnoliopsida</taxon>
        <taxon>eudicotyledons</taxon>
        <taxon>Gunneridae</taxon>
        <taxon>Pentapetalae</taxon>
        <taxon>rosids</taxon>
        <taxon>malvids</taxon>
        <taxon>Brassicales</taxon>
        <taxon>Brassicaceae</taxon>
        <taxon>Camelineae</taxon>
        <taxon>Arabidopsis</taxon>
    </lineage>
</organism>
<keyword id="KW-0010">Activator</keyword>
<keyword id="KW-0238">DNA-binding</keyword>
<keyword id="KW-0539">Nucleus</keyword>
<keyword id="KW-1185">Reference proteome</keyword>
<keyword id="KW-0346">Stress response</keyword>
<keyword id="KW-0804">Transcription</keyword>
<keyword id="KW-0805">Transcription regulation</keyword>
<comment type="function">
    <text evidence="4">Transcriptional activator that binds specifically to the DNA sequence 5'-[AG]CCGAC-3'. Binding to the C-repeat/DRE element mediates cold or dehydration-inducible transcription. CBF/DREB1 factors play a key role in freezing tolerance and cold acclimation.</text>
</comment>
<comment type="subcellular location">
    <subcellularLocation>
        <location evidence="5">Nucleus</location>
    </subcellularLocation>
</comment>
<comment type="induction">
    <text evidence="4">By high-salt stress.</text>
</comment>
<comment type="similarity">
    <text evidence="5">Belongs to the AP2/ERF transcription factor family. ERF subfamily.</text>
</comment>
<evidence type="ECO:0000255" key="1"/>
<evidence type="ECO:0000255" key="2">
    <source>
        <dbReference type="PROSITE-ProRule" id="PRU00366"/>
    </source>
</evidence>
<evidence type="ECO:0000256" key="3">
    <source>
        <dbReference type="SAM" id="MobiDB-lite"/>
    </source>
</evidence>
<evidence type="ECO:0000269" key="4">
    <source>
    </source>
</evidence>
<evidence type="ECO:0000305" key="5"/>
<accession>Q9LN86</accession>
<accession>Q0WRV1</accession>
<accession>Q6J9N3</accession>